<name>MIC60_TALSN</name>
<proteinExistence type="inferred from homology"/>
<reference key="1">
    <citation type="journal article" date="2015" name="Genome Announc.">
        <title>Genome sequence of the AIDS-associated pathogen Penicillium marneffei (ATCC18224) and its near taxonomic relative Talaromyces stipitatus (ATCC10500).</title>
        <authorList>
            <person name="Nierman W.C."/>
            <person name="Fedorova-Abrams N.D."/>
            <person name="Andrianopoulos A."/>
        </authorList>
    </citation>
    <scope>NUCLEOTIDE SEQUENCE [LARGE SCALE GENOMIC DNA]</scope>
    <source>
        <strain>ATCC 10500 / CBS 375.48 / QM 6759 / NRRL 1006</strain>
    </source>
</reference>
<dbReference type="EMBL" id="EQ962657">
    <property type="protein sequence ID" value="EED15203.1"/>
    <property type="molecule type" value="Genomic_DNA"/>
</dbReference>
<dbReference type="RefSeq" id="XP_002485156.1">
    <property type="nucleotide sequence ID" value="XM_002485111.1"/>
</dbReference>
<dbReference type="SMR" id="B8MJK3"/>
<dbReference type="FunCoup" id="B8MJK3">
    <property type="interactions" value="169"/>
</dbReference>
<dbReference type="STRING" id="441959.B8MJK3"/>
<dbReference type="GeneID" id="8099568"/>
<dbReference type="VEuPathDB" id="FungiDB:TSTA_046570"/>
<dbReference type="eggNOG" id="KOG1854">
    <property type="taxonomic scope" value="Eukaryota"/>
</dbReference>
<dbReference type="HOGENOM" id="CLU_008024_1_2_1"/>
<dbReference type="InParanoid" id="B8MJK3"/>
<dbReference type="OMA" id="RLDHQMQ"/>
<dbReference type="OrthoDB" id="10261039at2759"/>
<dbReference type="PhylomeDB" id="B8MJK3"/>
<dbReference type="Proteomes" id="UP000001745">
    <property type="component" value="Unassembled WGS sequence"/>
</dbReference>
<dbReference type="GO" id="GO:0061617">
    <property type="term" value="C:MICOS complex"/>
    <property type="evidence" value="ECO:0007669"/>
    <property type="project" value="TreeGrafter"/>
</dbReference>
<dbReference type="GO" id="GO:0042407">
    <property type="term" value="P:cristae formation"/>
    <property type="evidence" value="ECO:0007669"/>
    <property type="project" value="TreeGrafter"/>
</dbReference>
<dbReference type="InterPro" id="IPR019133">
    <property type="entry name" value="MIC60"/>
</dbReference>
<dbReference type="PANTHER" id="PTHR15415:SF7">
    <property type="entry name" value="MICOS COMPLEX SUBUNIT MIC60"/>
    <property type="match status" value="1"/>
</dbReference>
<dbReference type="PANTHER" id="PTHR15415">
    <property type="entry name" value="MITOFILIN"/>
    <property type="match status" value="1"/>
</dbReference>
<dbReference type="Pfam" id="PF09731">
    <property type="entry name" value="Mitofilin"/>
    <property type="match status" value="2"/>
</dbReference>
<accession>B8MJK3</accession>
<sequence>MLRYSVLSSQTRLLSVSRQRTATQLLASNRITTGKRYYADPKNVQPTSPTPVSPESKSVIPPETVNSVTTTPTTQVQTSPPSSIQPPQPPVENPSTGSVPPPPPKRKGRFRRFLLYLILTSGIAYGGGVFAALKSDNFHDFFTEYVPYGEEAVLYFEERDFYRRFPNATRHSNRLPPIHKEESQRVTIPSKSGLSWKVAEEESDSGSLTQKGPHNSAVSASKDTTGAKAVTKAKEERAEKKAPAKKEAPAPAPQEETRTPAITPPTTLELVKVEHADEPVVQEVVRIFNDIITVISADEGAASKYAAPISRVRTELESIGEKIVSLRAEAQKAAKEEIEKAHALFDESAKKLMQQIETARAAEAAQFREEFEAEREKLSRAYQDKIQTELARAQELAEQRLKNELVEQAIELNRKYLNDVKELVERERDGRLSKISELTANVNQLEKLTTDWSDVIETNLKTQQLQVAVDAVRSVLENAASAKPFVRELVAVKELAADDPVVAAAIASINPTAYQRGIPTTSQIIDRFRRVAGEVRKASLLPEDAGIASHAASFVLSKVMFKRDAVTDGNDVESVLVRTENLLEEGNLDAAAREMNTLQGWAKILSKDWLADVRRVLEVKQALEVMETEARLQCLRVES</sequence>
<comment type="function">
    <text evidence="1">Component of the MICOS complex, a large protein complex of the mitochondrial inner membrane that plays crucial roles in the maintenance of crista junctions, inner membrane architecture, and formation of contact sites to the outer membrane. Plays a role in keeping cristae membranes connected to the inner boundary membrane. Also promotes protein import via the mitochondrial intermembrane space assembly (MIA) pathway (By similarity).</text>
</comment>
<comment type="subunit">
    <text evidence="1">Component of the mitochondrial contact site and cristae organizing system (MICOS) complex.</text>
</comment>
<comment type="subcellular location">
    <subcellularLocation>
        <location evidence="1">Mitochondrion inner membrane</location>
        <topology evidence="1">Single-pass membrane protein</topology>
    </subcellularLocation>
</comment>
<comment type="similarity">
    <text evidence="4">Belongs to the MICOS complex subunit Mic60 family.</text>
</comment>
<keyword id="KW-0175">Coiled coil</keyword>
<keyword id="KW-0472">Membrane</keyword>
<keyword id="KW-0496">Mitochondrion</keyword>
<keyword id="KW-0999">Mitochondrion inner membrane</keyword>
<keyword id="KW-1185">Reference proteome</keyword>
<keyword id="KW-0809">Transit peptide</keyword>
<keyword id="KW-0812">Transmembrane</keyword>
<keyword id="KW-1133">Transmembrane helix</keyword>
<organism>
    <name type="scientific">Talaromyces stipitatus (strain ATCC 10500 / CBS 375.48 / QM 6759 / NRRL 1006)</name>
    <name type="common">Penicillium stipitatum</name>
    <dbReference type="NCBI Taxonomy" id="441959"/>
    <lineage>
        <taxon>Eukaryota</taxon>
        <taxon>Fungi</taxon>
        <taxon>Dikarya</taxon>
        <taxon>Ascomycota</taxon>
        <taxon>Pezizomycotina</taxon>
        <taxon>Eurotiomycetes</taxon>
        <taxon>Eurotiomycetidae</taxon>
        <taxon>Eurotiales</taxon>
        <taxon>Trichocomaceae</taxon>
        <taxon>Talaromyces</taxon>
        <taxon>Talaromyces sect. Talaromyces</taxon>
    </lineage>
</organism>
<feature type="transit peptide" description="Mitochondrion" evidence="2">
    <location>
        <begin position="1"/>
        <end position="38"/>
    </location>
</feature>
<feature type="chain" id="PRO_0000406675" description="MICOS complex subunit MIC60">
    <location>
        <begin position="39"/>
        <end position="639"/>
    </location>
</feature>
<feature type="topological domain" description="Mitochondrial matrix" evidence="2">
    <location>
        <begin position="39"/>
        <end position="112"/>
    </location>
</feature>
<feature type="transmembrane region" description="Helical" evidence="2">
    <location>
        <begin position="113"/>
        <end position="133"/>
    </location>
</feature>
<feature type="topological domain" description="Mitochondrial intermembrane" evidence="2">
    <location>
        <begin position="134"/>
        <end position="639"/>
    </location>
</feature>
<feature type="region of interest" description="Disordered" evidence="3">
    <location>
        <begin position="34"/>
        <end position="106"/>
    </location>
</feature>
<feature type="region of interest" description="Disordered" evidence="3">
    <location>
        <begin position="168"/>
        <end position="264"/>
    </location>
</feature>
<feature type="coiled-coil region" evidence="2">
    <location>
        <begin position="309"/>
        <end position="447"/>
    </location>
</feature>
<feature type="compositionally biased region" description="Low complexity" evidence="3">
    <location>
        <begin position="61"/>
        <end position="82"/>
    </location>
</feature>
<feature type="compositionally biased region" description="Pro residues" evidence="3">
    <location>
        <begin position="83"/>
        <end position="92"/>
    </location>
</feature>
<feature type="compositionally biased region" description="Polar residues" evidence="3">
    <location>
        <begin position="205"/>
        <end position="224"/>
    </location>
</feature>
<feature type="compositionally biased region" description="Basic and acidic residues" evidence="3">
    <location>
        <begin position="232"/>
        <end position="248"/>
    </location>
</feature>
<protein>
    <recommendedName>
        <fullName>MICOS complex subunit MIC60</fullName>
    </recommendedName>
    <alternativeName>
        <fullName>Mitofilin</fullName>
    </alternativeName>
</protein>
<gene>
    <name type="primary">MIC60</name>
    <name type="ORF">TSTA_046570</name>
</gene>
<evidence type="ECO:0000250" key="1"/>
<evidence type="ECO:0000255" key="2"/>
<evidence type="ECO:0000256" key="3">
    <source>
        <dbReference type="SAM" id="MobiDB-lite"/>
    </source>
</evidence>
<evidence type="ECO:0000305" key="4"/>